<evidence type="ECO:0000255" key="1">
    <source>
        <dbReference type="HAMAP-Rule" id="MF_00161"/>
    </source>
</evidence>
<proteinExistence type="inferred from homology"/>
<name>LSPA_BURCM</name>
<sequence>MAKTLSKPASGALAPWLGISLIVILFDQLSKIAILKTFAYGAQHALTSFFSLVLVYNRGAAFGFLSTASGWQRWAFTALGIGATLVICFLLRRHGQQRLFSLSLALILGGALGNVIDRLVYGHVIDFLDFHVGGWHFPAFNLADSAITIGAVLLVYDELRRVRGSR</sequence>
<accession>Q0BCK7</accession>
<organism>
    <name type="scientific">Burkholderia ambifaria (strain ATCC BAA-244 / DSM 16087 / CCUG 44356 / LMG 19182 / AMMD)</name>
    <name type="common">Burkholderia cepacia (strain AMMD)</name>
    <dbReference type="NCBI Taxonomy" id="339670"/>
    <lineage>
        <taxon>Bacteria</taxon>
        <taxon>Pseudomonadati</taxon>
        <taxon>Pseudomonadota</taxon>
        <taxon>Betaproteobacteria</taxon>
        <taxon>Burkholderiales</taxon>
        <taxon>Burkholderiaceae</taxon>
        <taxon>Burkholderia</taxon>
        <taxon>Burkholderia cepacia complex</taxon>
    </lineage>
</organism>
<gene>
    <name evidence="1" type="primary">lspA</name>
    <name type="ordered locus">Bamb_2560</name>
</gene>
<comment type="function">
    <text evidence="1">This protein specifically catalyzes the removal of signal peptides from prolipoproteins.</text>
</comment>
<comment type="catalytic activity">
    <reaction evidence="1">
        <text>Release of signal peptides from bacterial membrane prolipoproteins. Hydrolyzes -Xaa-Yaa-Zaa-|-(S,diacylglyceryl)Cys-, in which Xaa is hydrophobic (preferably Leu), and Yaa (Ala or Ser) and Zaa (Gly or Ala) have small, neutral side chains.</text>
        <dbReference type="EC" id="3.4.23.36"/>
    </reaction>
</comment>
<comment type="pathway">
    <text evidence="1">Protein modification; lipoprotein biosynthesis (signal peptide cleavage).</text>
</comment>
<comment type="subcellular location">
    <subcellularLocation>
        <location evidence="1">Cell inner membrane</location>
        <topology evidence="1">Multi-pass membrane protein</topology>
    </subcellularLocation>
</comment>
<comment type="similarity">
    <text evidence="1">Belongs to the peptidase A8 family.</text>
</comment>
<reference key="1">
    <citation type="submission" date="2006-08" db="EMBL/GenBank/DDBJ databases">
        <title>Complete sequence of chromosome 1 of Burkholderia cepacia AMMD.</title>
        <authorList>
            <person name="Copeland A."/>
            <person name="Lucas S."/>
            <person name="Lapidus A."/>
            <person name="Barry K."/>
            <person name="Detter J.C."/>
            <person name="Glavina del Rio T."/>
            <person name="Hammon N."/>
            <person name="Israni S."/>
            <person name="Pitluck S."/>
            <person name="Bruce D."/>
            <person name="Chain P."/>
            <person name="Malfatti S."/>
            <person name="Shin M."/>
            <person name="Vergez L."/>
            <person name="Schmutz J."/>
            <person name="Larimer F."/>
            <person name="Land M."/>
            <person name="Hauser L."/>
            <person name="Kyrpides N."/>
            <person name="Kim E."/>
            <person name="Parke J."/>
            <person name="Coenye T."/>
            <person name="Konstantinidis K."/>
            <person name="Ramette A."/>
            <person name="Tiedje J."/>
            <person name="Richardson P."/>
        </authorList>
    </citation>
    <scope>NUCLEOTIDE SEQUENCE [LARGE SCALE GENOMIC DNA]</scope>
    <source>
        <strain>ATCC BAA-244 / DSM 16087 / CCUG 44356 / LMG 19182 / AMMD</strain>
    </source>
</reference>
<keyword id="KW-0064">Aspartyl protease</keyword>
<keyword id="KW-0997">Cell inner membrane</keyword>
<keyword id="KW-1003">Cell membrane</keyword>
<keyword id="KW-0378">Hydrolase</keyword>
<keyword id="KW-0472">Membrane</keyword>
<keyword id="KW-0645">Protease</keyword>
<keyword id="KW-0812">Transmembrane</keyword>
<keyword id="KW-1133">Transmembrane helix</keyword>
<feature type="chain" id="PRO_1000038784" description="Lipoprotein signal peptidase">
    <location>
        <begin position="1"/>
        <end position="166"/>
    </location>
</feature>
<feature type="transmembrane region" description="Helical" evidence="1">
    <location>
        <begin position="9"/>
        <end position="29"/>
    </location>
</feature>
<feature type="transmembrane region" description="Helical" evidence="1">
    <location>
        <begin position="45"/>
        <end position="65"/>
    </location>
</feature>
<feature type="transmembrane region" description="Helical" evidence="1">
    <location>
        <begin position="71"/>
        <end position="91"/>
    </location>
</feature>
<feature type="transmembrane region" description="Helical" evidence="1">
    <location>
        <begin position="100"/>
        <end position="120"/>
    </location>
</feature>
<feature type="transmembrane region" description="Helical" evidence="1">
    <location>
        <begin position="135"/>
        <end position="155"/>
    </location>
</feature>
<feature type="active site" evidence="1">
    <location>
        <position position="126"/>
    </location>
</feature>
<feature type="active site" evidence="1">
    <location>
        <position position="144"/>
    </location>
</feature>
<dbReference type="EC" id="3.4.23.36" evidence="1"/>
<dbReference type="EMBL" id="CP000440">
    <property type="protein sequence ID" value="ABI88116.1"/>
    <property type="molecule type" value="Genomic_DNA"/>
</dbReference>
<dbReference type="RefSeq" id="WP_011657716.1">
    <property type="nucleotide sequence ID" value="NZ_CP009798.1"/>
</dbReference>
<dbReference type="SMR" id="Q0BCK7"/>
<dbReference type="GeneID" id="93085234"/>
<dbReference type="KEGG" id="bam:Bamb_2560"/>
<dbReference type="PATRIC" id="fig|339670.21.peg.2346"/>
<dbReference type="eggNOG" id="COG0597">
    <property type="taxonomic scope" value="Bacteria"/>
</dbReference>
<dbReference type="UniPathway" id="UPA00665"/>
<dbReference type="Proteomes" id="UP000000662">
    <property type="component" value="Chromosome 1"/>
</dbReference>
<dbReference type="GO" id="GO:0005886">
    <property type="term" value="C:plasma membrane"/>
    <property type="evidence" value="ECO:0007669"/>
    <property type="project" value="UniProtKB-SubCell"/>
</dbReference>
<dbReference type="GO" id="GO:0004190">
    <property type="term" value="F:aspartic-type endopeptidase activity"/>
    <property type="evidence" value="ECO:0007669"/>
    <property type="project" value="UniProtKB-UniRule"/>
</dbReference>
<dbReference type="GO" id="GO:0006508">
    <property type="term" value="P:proteolysis"/>
    <property type="evidence" value="ECO:0007669"/>
    <property type="project" value="UniProtKB-KW"/>
</dbReference>
<dbReference type="HAMAP" id="MF_00161">
    <property type="entry name" value="LspA"/>
    <property type="match status" value="1"/>
</dbReference>
<dbReference type="InterPro" id="IPR001872">
    <property type="entry name" value="Peptidase_A8"/>
</dbReference>
<dbReference type="NCBIfam" id="TIGR00077">
    <property type="entry name" value="lspA"/>
    <property type="match status" value="1"/>
</dbReference>
<dbReference type="PANTHER" id="PTHR33695">
    <property type="entry name" value="LIPOPROTEIN SIGNAL PEPTIDASE"/>
    <property type="match status" value="1"/>
</dbReference>
<dbReference type="PANTHER" id="PTHR33695:SF1">
    <property type="entry name" value="LIPOPROTEIN SIGNAL PEPTIDASE"/>
    <property type="match status" value="1"/>
</dbReference>
<dbReference type="Pfam" id="PF01252">
    <property type="entry name" value="Peptidase_A8"/>
    <property type="match status" value="1"/>
</dbReference>
<dbReference type="PRINTS" id="PR00781">
    <property type="entry name" value="LIPOSIGPTASE"/>
</dbReference>
<dbReference type="PROSITE" id="PS00855">
    <property type="entry name" value="SPASE_II"/>
    <property type="match status" value="1"/>
</dbReference>
<protein>
    <recommendedName>
        <fullName evidence="1">Lipoprotein signal peptidase</fullName>
        <ecNumber evidence="1">3.4.23.36</ecNumber>
    </recommendedName>
    <alternativeName>
        <fullName evidence="1">Prolipoprotein signal peptidase</fullName>
    </alternativeName>
    <alternativeName>
        <fullName evidence="1">Signal peptidase II</fullName>
        <shortName evidence="1">SPase II</shortName>
    </alternativeName>
</protein>